<proteinExistence type="evidence at protein level"/>
<name>AIRP1_ARATH</name>
<evidence type="ECO:0000255" key="1">
    <source>
        <dbReference type="PROSITE-ProRule" id="PRU00175"/>
    </source>
</evidence>
<evidence type="ECO:0000269" key="2">
    <source>
    </source>
</evidence>
<evidence type="ECO:0000269" key="3">
    <source>
    </source>
</evidence>
<evidence type="ECO:0000303" key="4">
    <source>
    </source>
</evidence>
<evidence type="ECO:0000305" key="5"/>
<evidence type="ECO:0000305" key="6">
    <source>
    </source>
</evidence>
<evidence type="ECO:0000305" key="7">
    <source>
    </source>
</evidence>
<evidence type="ECO:0000312" key="8">
    <source>
        <dbReference type="Araport" id="AT4G23450"/>
    </source>
</evidence>
<evidence type="ECO:0000312" key="9">
    <source>
        <dbReference type="EMBL" id="CAA20466.1"/>
    </source>
</evidence>
<feature type="chain" id="PRO_0000443383" description="E3 ubiquitin-protein ligase AIRP1">
    <location>
        <begin position="1"/>
        <end position="153"/>
    </location>
</feature>
<feature type="zinc finger region" description="RING-type; atypical" evidence="1">
    <location>
        <begin position="104"/>
        <end position="145"/>
    </location>
</feature>
<feature type="mutagenesis site" description="Strongly reduces E3 ubiquitin-protein ligase activity; when associated with A-124 and A-127." evidence="2">
    <original>C</original>
    <variation>A</variation>
    <location>
        <position position="122"/>
    </location>
</feature>
<feature type="mutagenesis site" description="Strongly reduces E3 ubiquitin-protein ligase activity; when associated with A-122 and A-127." evidence="2">
    <original>H</original>
    <variation>A</variation>
    <location>
        <position position="124"/>
    </location>
</feature>
<feature type="mutagenesis site" description="Strongly reduces E3 ubiquitin-protein ligase activity; when associated with A-122 and A-124." evidence="2">
    <original>H</original>
    <variation>A</variation>
    <location>
        <position position="127"/>
    </location>
</feature>
<feature type="mutagenesis site" description="Strongly reduces E3 ubiquitin-protein ligase activity." evidence="3">
    <original>H</original>
    <variation>Y</variation>
    <location>
        <position position="127"/>
    </location>
</feature>
<reference key="1">
    <citation type="journal article" date="2005" name="Plant Physiol.">
        <title>Functional analysis of the RING-type ubiquitin ligase family of Arabidopsis.</title>
        <authorList>
            <person name="Stone S.L."/>
            <person name="Hauksdottir H."/>
            <person name="Troy A."/>
            <person name="Herschleb J."/>
            <person name="Kraft E."/>
            <person name="Callis J."/>
        </authorList>
    </citation>
    <scope>NUCLEOTIDE SEQUENCE [MRNA]</scope>
    <scope>FUNCTION</scope>
    <scope>CATALYTIC ACTIVITY</scope>
    <scope>DOMAIN</scope>
    <scope>MUTAGENESIS OF CYS-122; HIS-124 AND HIS-127</scope>
    <source>
        <strain>cv. Columbia</strain>
        <tissue>Leaf</tissue>
    </source>
</reference>
<reference key="2">
    <citation type="journal article" date="1999" name="Nature">
        <title>Sequence and analysis of chromosome 4 of the plant Arabidopsis thaliana.</title>
        <authorList>
            <person name="Mayer K.F.X."/>
            <person name="Schueller C."/>
            <person name="Wambutt R."/>
            <person name="Murphy G."/>
            <person name="Volckaert G."/>
            <person name="Pohl T."/>
            <person name="Duesterhoeft A."/>
            <person name="Stiekema W."/>
            <person name="Entian K.-D."/>
            <person name="Terryn N."/>
            <person name="Harris B."/>
            <person name="Ansorge W."/>
            <person name="Brandt P."/>
            <person name="Grivell L.A."/>
            <person name="Rieger M."/>
            <person name="Weichselgartner M."/>
            <person name="de Simone V."/>
            <person name="Obermaier B."/>
            <person name="Mache R."/>
            <person name="Mueller M."/>
            <person name="Kreis M."/>
            <person name="Delseny M."/>
            <person name="Puigdomenech P."/>
            <person name="Watson M."/>
            <person name="Schmidtheini T."/>
            <person name="Reichert B."/>
            <person name="Portetelle D."/>
            <person name="Perez-Alonso M."/>
            <person name="Boutry M."/>
            <person name="Bancroft I."/>
            <person name="Vos P."/>
            <person name="Hoheisel J."/>
            <person name="Zimmermann W."/>
            <person name="Wedler H."/>
            <person name="Ridley P."/>
            <person name="Langham S.-A."/>
            <person name="McCullagh B."/>
            <person name="Bilham L."/>
            <person name="Robben J."/>
            <person name="van der Schueren J."/>
            <person name="Grymonprez B."/>
            <person name="Chuang Y.-J."/>
            <person name="Vandenbussche F."/>
            <person name="Braeken M."/>
            <person name="Weltjens I."/>
            <person name="Voet M."/>
            <person name="Bastiaens I."/>
            <person name="Aert R."/>
            <person name="Defoor E."/>
            <person name="Weitzenegger T."/>
            <person name="Bothe G."/>
            <person name="Ramsperger U."/>
            <person name="Hilbert H."/>
            <person name="Braun M."/>
            <person name="Holzer E."/>
            <person name="Brandt A."/>
            <person name="Peters S."/>
            <person name="van Staveren M."/>
            <person name="Dirkse W."/>
            <person name="Mooijman P."/>
            <person name="Klein Lankhorst R."/>
            <person name="Rose M."/>
            <person name="Hauf J."/>
            <person name="Koetter P."/>
            <person name="Berneiser S."/>
            <person name="Hempel S."/>
            <person name="Feldpausch M."/>
            <person name="Lamberth S."/>
            <person name="Van den Daele H."/>
            <person name="De Keyser A."/>
            <person name="Buysshaert C."/>
            <person name="Gielen J."/>
            <person name="Villarroel R."/>
            <person name="De Clercq R."/>
            <person name="van Montagu M."/>
            <person name="Rogers J."/>
            <person name="Cronin A."/>
            <person name="Quail M.A."/>
            <person name="Bray-Allen S."/>
            <person name="Clark L."/>
            <person name="Doggett J."/>
            <person name="Hall S."/>
            <person name="Kay M."/>
            <person name="Lennard N."/>
            <person name="McLay K."/>
            <person name="Mayes R."/>
            <person name="Pettett A."/>
            <person name="Rajandream M.A."/>
            <person name="Lyne M."/>
            <person name="Benes V."/>
            <person name="Rechmann S."/>
            <person name="Borkova D."/>
            <person name="Bloecker H."/>
            <person name="Scharfe M."/>
            <person name="Grimm M."/>
            <person name="Loehnert T.-H."/>
            <person name="Dose S."/>
            <person name="de Haan M."/>
            <person name="Maarse A.C."/>
            <person name="Schaefer M."/>
            <person name="Mueller-Auer S."/>
            <person name="Gabel C."/>
            <person name="Fuchs M."/>
            <person name="Fartmann B."/>
            <person name="Granderath K."/>
            <person name="Dauner D."/>
            <person name="Herzl A."/>
            <person name="Neumann S."/>
            <person name="Argiriou A."/>
            <person name="Vitale D."/>
            <person name="Liguori R."/>
            <person name="Piravandi E."/>
            <person name="Massenet O."/>
            <person name="Quigley F."/>
            <person name="Clabauld G."/>
            <person name="Muendlein A."/>
            <person name="Felber R."/>
            <person name="Schnabl S."/>
            <person name="Hiller R."/>
            <person name="Schmidt W."/>
            <person name="Lecharny A."/>
            <person name="Aubourg S."/>
            <person name="Chefdor F."/>
            <person name="Cooke R."/>
            <person name="Berger C."/>
            <person name="Monfort A."/>
            <person name="Casacuberta E."/>
            <person name="Gibbons T."/>
            <person name="Weber N."/>
            <person name="Vandenbol M."/>
            <person name="Bargues M."/>
            <person name="Terol J."/>
            <person name="Torres A."/>
            <person name="Perez-Perez A."/>
            <person name="Purnelle B."/>
            <person name="Bent E."/>
            <person name="Johnson S."/>
            <person name="Tacon D."/>
            <person name="Jesse T."/>
            <person name="Heijnen L."/>
            <person name="Schwarz S."/>
            <person name="Scholler P."/>
            <person name="Heber S."/>
            <person name="Francs P."/>
            <person name="Bielke C."/>
            <person name="Frishman D."/>
            <person name="Haase D."/>
            <person name="Lemcke K."/>
            <person name="Mewes H.-W."/>
            <person name="Stocker S."/>
            <person name="Zaccaria P."/>
            <person name="Bevan M."/>
            <person name="Wilson R.K."/>
            <person name="de la Bastide M."/>
            <person name="Habermann K."/>
            <person name="Parnell L."/>
            <person name="Dedhia N."/>
            <person name="Gnoj L."/>
            <person name="Schutz K."/>
            <person name="Huang E."/>
            <person name="Spiegel L."/>
            <person name="Sekhon M."/>
            <person name="Murray J."/>
            <person name="Sheet P."/>
            <person name="Cordes M."/>
            <person name="Abu-Threideh J."/>
            <person name="Stoneking T."/>
            <person name="Kalicki J."/>
            <person name="Graves T."/>
            <person name="Harmon G."/>
            <person name="Edwards J."/>
            <person name="Latreille P."/>
            <person name="Courtney L."/>
            <person name="Cloud J."/>
            <person name="Abbott A."/>
            <person name="Scott K."/>
            <person name="Johnson D."/>
            <person name="Minx P."/>
            <person name="Bentley D."/>
            <person name="Fulton B."/>
            <person name="Miller N."/>
            <person name="Greco T."/>
            <person name="Kemp K."/>
            <person name="Kramer J."/>
            <person name="Fulton L."/>
            <person name="Mardis E."/>
            <person name="Dante M."/>
            <person name="Pepin K."/>
            <person name="Hillier L.W."/>
            <person name="Nelson J."/>
            <person name="Spieth J."/>
            <person name="Ryan E."/>
            <person name="Andrews S."/>
            <person name="Geisel C."/>
            <person name="Layman D."/>
            <person name="Du H."/>
            <person name="Ali J."/>
            <person name="Berghoff A."/>
            <person name="Jones K."/>
            <person name="Drone K."/>
            <person name="Cotton M."/>
            <person name="Joshu C."/>
            <person name="Antonoiu B."/>
            <person name="Zidanic M."/>
            <person name="Strong C."/>
            <person name="Sun H."/>
            <person name="Lamar B."/>
            <person name="Yordan C."/>
            <person name="Ma P."/>
            <person name="Zhong J."/>
            <person name="Preston R."/>
            <person name="Vil D."/>
            <person name="Shekher M."/>
            <person name="Matero A."/>
            <person name="Shah R."/>
            <person name="Swaby I.K."/>
            <person name="O'Shaughnessy A."/>
            <person name="Rodriguez M."/>
            <person name="Hoffman J."/>
            <person name="Till S."/>
            <person name="Granat S."/>
            <person name="Shohdy N."/>
            <person name="Hasegawa A."/>
            <person name="Hameed A."/>
            <person name="Lodhi M."/>
            <person name="Johnson A."/>
            <person name="Chen E."/>
            <person name="Marra M.A."/>
            <person name="Martienssen R."/>
            <person name="McCombie W.R."/>
        </authorList>
    </citation>
    <scope>NUCLEOTIDE SEQUENCE [LARGE SCALE GENOMIC DNA]</scope>
    <source>
        <strain>cv. Columbia</strain>
    </source>
</reference>
<reference key="3">
    <citation type="journal article" date="2017" name="Plant J.">
        <title>Araport11: a complete reannotation of the Arabidopsis thaliana reference genome.</title>
        <authorList>
            <person name="Cheng C.Y."/>
            <person name="Krishnakumar V."/>
            <person name="Chan A.P."/>
            <person name="Thibaud-Nissen F."/>
            <person name="Schobel S."/>
            <person name="Town C.D."/>
        </authorList>
    </citation>
    <scope>GENOME REANNOTATION</scope>
    <source>
        <strain>cv. Columbia</strain>
    </source>
</reference>
<reference key="4">
    <citation type="journal article" date="2003" name="Science">
        <title>Empirical analysis of transcriptional activity in the Arabidopsis genome.</title>
        <authorList>
            <person name="Yamada K."/>
            <person name="Lim J."/>
            <person name="Dale J.M."/>
            <person name="Chen H."/>
            <person name="Shinn P."/>
            <person name="Palm C.J."/>
            <person name="Southwick A.M."/>
            <person name="Wu H.C."/>
            <person name="Kim C.J."/>
            <person name="Nguyen M."/>
            <person name="Pham P.K."/>
            <person name="Cheuk R.F."/>
            <person name="Karlin-Newmann G."/>
            <person name="Liu S.X."/>
            <person name="Lam B."/>
            <person name="Sakano H."/>
            <person name="Wu T."/>
            <person name="Yu G."/>
            <person name="Miranda M."/>
            <person name="Quach H.L."/>
            <person name="Tripp M."/>
            <person name="Chang C.H."/>
            <person name="Lee J.M."/>
            <person name="Toriumi M.J."/>
            <person name="Chan M.M."/>
            <person name="Tang C.C."/>
            <person name="Onodera C.S."/>
            <person name="Deng J.M."/>
            <person name="Akiyama K."/>
            <person name="Ansari Y."/>
            <person name="Arakawa T."/>
            <person name="Banh J."/>
            <person name="Banno F."/>
            <person name="Bowser L."/>
            <person name="Brooks S.Y."/>
            <person name="Carninci P."/>
            <person name="Chao Q."/>
            <person name="Choy N."/>
            <person name="Enju A."/>
            <person name="Goldsmith A.D."/>
            <person name="Gurjal M."/>
            <person name="Hansen N.F."/>
            <person name="Hayashizaki Y."/>
            <person name="Johnson-Hopson C."/>
            <person name="Hsuan V.W."/>
            <person name="Iida K."/>
            <person name="Karnes M."/>
            <person name="Khan S."/>
            <person name="Koesema E."/>
            <person name="Ishida J."/>
            <person name="Jiang P.X."/>
            <person name="Jones T."/>
            <person name="Kawai J."/>
            <person name="Kamiya A."/>
            <person name="Meyers C."/>
            <person name="Nakajima M."/>
            <person name="Narusaka M."/>
            <person name="Seki M."/>
            <person name="Sakurai T."/>
            <person name="Satou M."/>
            <person name="Tamse R."/>
            <person name="Vaysberg M."/>
            <person name="Wallender E.K."/>
            <person name="Wong C."/>
            <person name="Yamamura Y."/>
            <person name="Yuan S."/>
            <person name="Shinozaki K."/>
            <person name="Davis R.W."/>
            <person name="Theologis A."/>
            <person name="Ecker J.R."/>
        </authorList>
    </citation>
    <scope>NUCLEOTIDE SEQUENCE [LARGE SCALE MRNA]</scope>
    <source>
        <strain>cv. Columbia</strain>
    </source>
</reference>
<reference key="5">
    <citation type="journal article" date="2010" name="Plant Physiol.">
        <title>The Arabidopsis C3H2C3-type RING E3 ubiquitin ligase AtAIRP1 is a positive regulator of an abscisic acid-dependent response to drought stress.</title>
        <authorList>
            <person name="Ryu M.Y."/>
            <person name="Cho S.K."/>
            <person name="Kim W.T."/>
        </authorList>
    </citation>
    <scope>FUNCTION</scope>
    <scope>CATALYTIC ACTIVITY</scope>
    <scope>SUBCELLULAR LOCATION</scope>
    <scope>INDUCTION</scope>
    <scope>DOMAIN</scope>
    <scope>DISRUPTION PHENOTYPE</scope>
    <scope>MUTAGENESIS OF HIS-127</scope>
</reference>
<organism>
    <name type="scientific">Arabidopsis thaliana</name>
    <name type="common">Mouse-ear cress</name>
    <dbReference type="NCBI Taxonomy" id="3702"/>
    <lineage>
        <taxon>Eukaryota</taxon>
        <taxon>Viridiplantae</taxon>
        <taxon>Streptophyta</taxon>
        <taxon>Embryophyta</taxon>
        <taxon>Tracheophyta</taxon>
        <taxon>Spermatophyta</taxon>
        <taxon>Magnoliopsida</taxon>
        <taxon>eudicotyledons</taxon>
        <taxon>Gunneridae</taxon>
        <taxon>Pentapetalae</taxon>
        <taxon>rosids</taxon>
        <taxon>malvids</taxon>
        <taxon>Brassicales</taxon>
        <taxon>Brassicaceae</taxon>
        <taxon>Camelineae</taxon>
        <taxon>Arabidopsis</taxon>
    </lineage>
</organism>
<keyword id="KW-0963">Cytoplasm</keyword>
<keyword id="KW-0479">Metal-binding</keyword>
<keyword id="KW-1185">Reference proteome</keyword>
<keyword id="KW-0346">Stress response</keyword>
<keyword id="KW-0808">Transferase</keyword>
<keyword id="KW-0833">Ubl conjugation pathway</keyword>
<keyword id="KW-0862">Zinc</keyword>
<keyword id="KW-0863">Zinc-finger</keyword>
<gene>
    <name evidence="4" type="primary">AIRP1</name>
    <name evidence="8" type="ordered locus">At4g23450</name>
    <name evidence="9" type="ORF">F16G20.150</name>
</gene>
<protein>
    <recommendedName>
        <fullName evidence="5">E3 ubiquitin-protein ligase AIRP1</fullName>
        <ecNumber evidence="2 3">2.3.2.27</ecNumber>
    </recommendedName>
    <alternativeName>
        <fullName evidence="4">Protein ABA INSENSITIVE RING PROTEIN 1</fullName>
        <shortName evidence="4">AtAIRP1</shortName>
    </alternativeName>
    <alternativeName>
        <fullName evidence="5">RING-type E3 ubiquitin transferase AIRP1</fullName>
    </alternativeName>
</protein>
<dbReference type="EC" id="2.3.2.27" evidence="2 3"/>
<dbReference type="EMBL" id="DQ059123">
    <property type="protein sequence ID" value="AAY57609.1"/>
    <property type="molecule type" value="mRNA"/>
</dbReference>
<dbReference type="EMBL" id="AL031326">
    <property type="protein sequence ID" value="CAA20466.1"/>
    <property type="status" value="ALT_SEQ"/>
    <property type="molecule type" value="Genomic_DNA"/>
</dbReference>
<dbReference type="EMBL" id="AL161559">
    <property type="protein sequence ID" value="CAB79300.1"/>
    <property type="status" value="ALT_SEQ"/>
    <property type="molecule type" value="Genomic_DNA"/>
</dbReference>
<dbReference type="EMBL" id="CP002687">
    <property type="protein sequence ID" value="AEE84758.1"/>
    <property type="molecule type" value="Genomic_DNA"/>
</dbReference>
<dbReference type="EMBL" id="CP002687">
    <property type="protein sequence ID" value="ANM68051.1"/>
    <property type="molecule type" value="Genomic_DNA"/>
</dbReference>
<dbReference type="EMBL" id="CP002687">
    <property type="protein sequence ID" value="ANM68052.1"/>
    <property type="molecule type" value="Genomic_DNA"/>
</dbReference>
<dbReference type="EMBL" id="CP002687">
    <property type="protein sequence ID" value="ANM68053.1"/>
    <property type="molecule type" value="Genomic_DNA"/>
</dbReference>
<dbReference type="EMBL" id="AY057571">
    <property type="protein sequence ID" value="AAL09810.1"/>
    <property type="molecule type" value="mRNA"/>
</dbReference>
<dbReference type="EMBL" id="AY093984">
    <property type="protein sequence ID" value="AAM16245.1"/>
    <property type="molecule type" value="mRNA"/>
</dbReference>
<dbReference type="PIR" id="T05383">
    <property type="entry name" value="T05383"/>
</dbReference>
<dbReference type="RefSeq" id="NP_001329832.1">
    <property type="nucleotide sequence ID" value="NM_001341615.1"/>
</dbReference>
<dbReference type="RefSeq" id="NP_001329833.1">
    <property type="nucleotide sequence ID" value="NM_001341616.1"/>
</dbReference>
<dbReference type="RefSeq" id="NP_001329834.1">
    <property type="nucleotide sequence ID" value="NM_001341614.1"/>
</dbReference>
<dbReference type="RefSeq" id="NP_567682.1">
    <property type="nucleotide sequence ID" value="NM_118474.4"/>
</dbReference>
<dbReference type="SMR" id="Q93ZF6"/>
<dbReference type="IntAct" id="Q93ZF6">
    <property type="interactions" value="2"/>
</dbReference>
<dbReference type="STRING" id="3702.Q93ZF6"/>
<dbReference type="PaxDb" id="3702-AT4G23450.3"/>
<dbReference type="ProteomicsDB" id="244671"/>
<dbReference type="EnsemblPlants" id="AT4G23450.1">
    <property type="protein sequence ID" value="AT4G23450.1"/>
    <property type="gene ID" value="AT4G23450"/>
</dbReference>
<dbReference type="EnsemblPlants" id="AT4G23450.4">
    <property type="protein sequence ID" value="AT4G23450.4"/>
    <property type="gene ID" value="AT4G23450"/>
</dbReference>
<dbReference type="EnsemblPlants" id="AT4G23450.5">
    <property type="protein sequence ID" value="AT4G23450.5"/>
    <property type="gene ID" value="AT4G23450"/>
</dbReference>
<dbReference type="EnsemblPlants" id="AT4G23450.6">
    <property type="protein sequence ID" value="AT4G23450.6"/>
    <property type="gene ID" value="AT4G23450"/>
</dbReference>
<dbReference type="GeneID" id="828444"/>
<dbReference type="Gramene" id="AT4G23450.1">
    <property type="protein sequence ID" value="AT4G23450.1"/>
    <property type="gene ID" value="AT4G23450"/>
</dbReference>
<dbReference type="Gramene" id="AT4G23450.4">
    <property type="protein sequence ID" value="AT4G23450.4"/>
    <property type="gene ID" value="AT4G23450"/>
</dbReference>
<dbReference type="Gramene" id="AT4G23450.5">
    <property type="protein sequence ID" value="AT4G23450.5"/>
    <property type="gene ID" value="AT4G23450"/>
</dbReference>
<dbReference type="Gramene" id="AT4G23450.6">
    <property type="protein sequence ID" value="AT4G23450.6"/>
    <property type="gene ID" value="AT4G23450"/>
</dbReference>
<dbReference type="KEGG" id="ath:AT4G23450"/>
<dbReference type="Araport" id="AT4G23450"/>
<dbReference type="TAIR" id="AT4G23450">
    <property type="gene designation" value="AIRP1"/>
</dbReference>
<dbReference type="InParanoid" id="Q93ZF6"/>
<dbReference type="PhylomeDB" id="Q93ZF6"/>
<dbReference type="BRENDA" id="2.3.2.27">
    <property type="organism ID" value="399"/>
</dbReference>
<dbReference type="PRO" id="PR:Q93ZF6"/>
<dbReference type="Proteomes" id="UP000006548">
    <property type="component" value="Chromosome 4"/>
</dbReference>
<dbReference type="ExpressionAtlas" id="Q93ZF6">
    <property type="expression patterns" value="baseline and differential"/>
</dbReference>
<dbReference type="GO" id="GO:0005829">
    <property type="term" value="C:cytosol"/>
    <property type="evidence" value="ECO:0000314"/>
    <property type="project" value="UniProtKB"/>
</dbReference>
<dbReference type="GO" id="GO:0004842">
    <property type="term" value="F:ubiquitin-protein transferase activity"/>
    <property type="evidence" value="ECO:0000314"/>
    <property type="project" value="UniProtKB"/>
</dbReference>
<dbReference type="GO" id="GO:0008270">
    <property type="term" value="F:zinc ion binding"/>
    <property type="evidence" value="ECO:0007669"/>
    <property type="project" value="UniProtKB-KW"/>
</dbReference>
<dbReference type="GO" id="GO:0009789">
    <property type="term" value="P:positive regulation of abscisic acid-activated signaling pathway"/>
    <property type="evidence" value="ECO:0000315"/>
    <property type="project" value="UniProtKB"/>
</dbReference>
<dbReference type="GO" id="GO:0010729">
    <property type="term" value="P:positive regulation of hydrogen peroxide biosynthetic process"/>
    <property type="evidence" value="ECO:0000315"/>
    <property type="project" value="UniProtKB"/>
</dbReference>
<dbReference type="Gene3D" id="3.30.40.10">
    <property type="entry name" value="Zinc/RING finger domain, C3HC4 (zinc finger)"/>
    <property type="match status" value="1"/>
</dbReference>
<dbReference type="InterPro" id="IPR001841">
    <property type="entry name" value="Znf_RING"/>
</dbReference>
<dbReference type="InterPro" id="IPR013083">
    <property type="entry name" value="Znf_RING/FYVE/PHD"/>
</dbReference>
<dbReference type="PANTHER" id="PTHR46463:SF55">
    <property type="entry name" value="E3 UBIQUITIN-PROTEIN LIGASE AIRP1"/>
    <property type="match status" value="1"/>
</dbReference>
<dbReference type="PANTHER" id="PTHR46463">
    <property type="entry name" value="ZINC FINGER, RING/FYVE/PHD-TYPE"/>
    <property type="match status" value="1"/>
</dbReference>
<dbReference type="Pfam" id="PF13639">
    <property type="entry name" value="zf-RING_2"/>
    <property type="match status" value="1"/>
</dbReference>
<dbReference type="SMART" id="SM00184">
    <property type="entry name" value="RING"/>
    <property type="match status" value="1"/>
</dbReference>
<dbReference type="SUPFAM" id="SSF57850">
    <property type="entry name" value="RING/U-box"/>
    <property type="match status" value="1"/>
</dbReference>
<dbReference type="PROSITE" id="PS50089">
    <property type="entry name" value="ZF_RING_2"/>
    <property type="match status" value="1"/>
</dbReference>
<accession>Q93ZF6</accession>
<accession>O81741</accession>
<comment type="function">
    <text evidence="2 3">Possesses E3 ubiquitin-protein ligase activity in vitro when associated with the E2 enzyme UBC8 in vitro (PubMed:15644464, PubMed:20884812). Plays combinatory roles with AIRP2 in the positive regulation of the abscisic acid-mediated drought stress response (PubMed:20884812).</text>
</comment>
<comment type="catalytic activity">
    <reaction evidence="2 3">
        <text>S-ubiquitinyl-[E2 ubiquitin-conjugating enzyme]-L-cysteine + [acceptor protein]-L-lysine = [E2 ubiquitin-conjugating enzyme]-L-cysteine + N(6)-ubiquitinyl-[acceptor protein]-L-lysine.</text>
        <dbReference type="EC" id="2.3.2.27"/>
    </reaction>
</comment>
<comment type="interaction">
    <interactant intactId="EBI-4465263">
        <id>Q93ZF6</id>
    </interactant>
    <interactant intactId="EBI-3386882">
        <id>Q9SVD7</id>
        <label>UEV1D</label>
    </interactant>
    <organismsDiffer>false</organismsDiffer>
    <experiments>3</experiments>
</comment>
<comment type="subcellular location">
    <subcellularLocation>
        <location evidence="3">Cytoplasm</location>
        <location evidence="3">Cytosol</location>
    </subcellularLocation>
</comment>
<comment type="induction">
    <text evidence="3">Induced by salt stress, cold stress, drought stress and abscisic acid (ABA).</text>
</comment>
<comment type="domain">
    <text evidence="6 7">The RING-type zinc finger domain is required for E3 ligase activity.</text>
</comment>
<comment type="disruption phenotype">
    <text evidence="3">No visible phenotype under normal growth conditions, but mutant seeds are insensitive to germination inhibition by abscisic acid (ABA).</text>
</comment>
<comment type="miscellaneous">
    <text evidence="3">Plants over-expressing AIRP1 exhibit tolerance to severe drought stress.</text>
</comment>
<comment type="sequence caution" evidence="5">
    <conflict type="erroneous gene model prediction">
        <sequence resource="EMBL-CDS" id="CAA20466"/>
    </conflict>
</comment>
<comment type="sequence caution" evidence="5">
    <conflict type="erroneous gene model prediction">
        <sequence resource="EMBL-CDS" id="CAB79300"/>
    </conflict>
</comment>
<sequence>MGCCCCLPSIPESSRTIDEHLPLSRATPSSLSNAYSSPLSPPIPLAITNINLQTSPPKLPRTQGNSSEASPGLTQVVPEKKTWHVDDLTDFELKKQYREAIDECPICLEEYEIDNPKLLTKCGHDFHLACILAWMERSEACPVCDKELVLTES</sequence>